<gene>
    <name evidence="1" type="primary">rpsR</name>
    <name type="ordered locus">Tfu_3093</name>
</gene>
<feature type="chain" id="PRO_1000003648" description="Small ribosomal subunit protein bS18">
    <location>
        <begin position="1"/>
        <end position="78"/>
    </location>
</feature>
<name>RS18_THEFY</name>
<reference key="1">
    <citation type="journal article" date="2007" name="J. Bacteriol.">
        <title>Genome sequence and analysis of the soil cellulolytic actinomycete Thermobifida fusca YX.</title>
        <authorList>
            <person name="Lykidis A."/>
            <person name="Mavromatis K."/>
            <person name="Ivanova N."/>
            <person name="Anderson I."/>
            <person name="Land M."/>
            <person name="DiBartolo G."/>
            <person name="Martinez M."/>
            <person name="Lapidus A."/>
            <person name="Lucas S."/>
            <person name="Copeland A."/>
            <person name="Richardson P."/>
            <person name="Wilson D.B."/>
            <person name="Kyrpides N."/>
        </authorList>
    </citation>
    <scope>NUCLEOTIDE SEQUENCE [LARGE SCALE GENOMIC DNA]</scope>
    <source>
        <strain>YX</strain>
    </source>
</reference>
<proteinExistence type="inferred from homology"/>
<keyword id="KW-0687">Ribonucleoprotein</keyword>
<keyword id="KW-0689">Ribosomal protein</keyword>
<keyword id="KW-0694">RNA-binding</keyword>
<keyword id="KW-0699">rRNA-binding</keyword>
<organism>
    <name type="scientific">Thermobifida fusca (strain YX)</name>
    <dbReference type="NCBI Taxonomy" id="269800"/>
    <lineage>
        <taxon>Bacteria</taxon>
        <taxon>Bacillati</taxon>
        <taxon>Actinomycetota</taxon>
        <taxon>Actinomycetes</taxon>
        <taxon>Streptosporangiales</taxon>
        <taxon>Nocardiopsidaceae</taxon>
        <taxon>Thermobifida</taxon>
    </lineage>
</organism>
<dbReference type="EMBL" id="CP000088">
    <property type="protein sequence ID" value="AAZ57126.1"/>
    <property type="molecule type" value="Genomic_DNA"/>
</dbReference>
<dbReference type="RefSeq" id="WP_011293510.1">
    <property type="nucleotide sequence ID" value="NC_007333.1"/>
</dbReference>
<dbReference type="SMR" id="Q47K96"/>
<dbReference type="STRING" id="269800.Tfu_3093"/>
<dbReference type="KEGG" id="tfu:Tfu_3093"/>
<dbReference type="eggNOG" id="COG0238">
    <property type="taxonomic scope" value="Bacteria"/>
</dbReference>
<dbReference type="HOGENOM" id="CLU_148710_2_2_11"/>
<dbReference type="OrthoDB" id="9812008at2"/>
<dbReference type="GO" id="GO:0022627">
    <property type="term" value="C:cytosolic small ribosomal subunit"/>
    <property type="evidence" value="ECO:0007669"/>
    <property type="project" value="TreeGrafter"/>
</dbReference>
<dbReference type="GO" id="GO:0070181">
    <property type="term" value="F:small ribosomal subunit rRNA binding"/>
    <property type="evidence" value="ECO:0007669"/>
    <property type="project" value="TreeGrafter"/>
</dbReference>
<dbReference type="GO" id="GO:0003735">
    <property type="term" value="F:structural constituent of ribosome"/>
    <property type="evidence" value="ECO:0007669"/>
    <property type="project" value="InterPro"/>
</dbReference>
<dbReference type="GO" id="GO:0006412">
    <property type="term" value="P:translation"/>
    <property type="evidence" value="ECO:0007669"/>
    <property type="project" value="UniProtKB-UniRule"/>
</dbReference>
<dbReference type="FunFam" id="4.10.640.10:FF:000004">
    <property type="entry name" value="30S ribosomal protein S18"/>
    <property type="match status" value="1"/>
</dbReference>
<dbReference type="Gene3D" id="4.10.640.10">
    <property type="entry name" value="Ribosomal protein S18"/>
    <property type="match status" value="1"/>
</dbReference>
<dbReference type="HAMAP" id="MF_00270">
    <property type="entry name" value="Ribosomal_bS18"/>
    <property type="match status" value="1"/>
</dbReference>
<dbReference type="InterPro" id="IPR001648">
    <property type="entry name" value="Ribosomal_bS18"/>
</dbReference>
<dbReference type="InterPro" id="IPR018275">
    <property type="entry name" value="Ribosomal_bS18_CS"/>
</dbReference>
<dbReference type="InterPro" id="IPR036870">
    <property type="entry name" value="Ribosomal_bS18_sf"/>
</dbReference>
<dbReference type="NCBIfam" id="TIGR00165">
    <property type="entry name" value="S18"/>
    <property type="match status" value="1"/>
</dbReference>
<dbReference type="PANTHER" id="PTHR13479">
    <property type="entry name" value="30S RIBOSOMAL PROTEIN S18"/>
    <property type="match status" value="1"/>
</dbReference>
<dbReference type="PANTHER" id="PTHR13479:SF62">
    <property type="entry name" value="SMALL RIBOSOMAL SUBUNIT PROTEIN BS18A"/>
    <property type="match status" value="1"/>
</dbReference>
<dbReference type="Pfam" id="PF01084">
    <property type="entry name" value="Ribosomal_S18"/>
    <property type="match status" value="1"/>
</dbReference>
<dbReference type="PRINTS" id="PR00974">
    <property type="entry name" value="RIBOSOMALS18"/>
</dbReference>
<dbReference type="SUPFAM" id="SSF46911">
    <property type="entry name" value="Ribosomal protein S18"/>
    <property type="match status" value="1"/>
</dbReference>
<dbReference type="PROSITE" id="PS00057">
    <property type="entry name" value="RIBOSOMAL_S18"/>
    <property type="match status" value="1"/>
</dbReference>
<protein>
    <recommendedName>
        <fullName evidence="1">Small ribosomal subunit protein bS18</fullName>
    </recommendedName>
    <alternativeName>
        <fullName evidence="2">30S ribosomal protein S18</fullName>
    </alternativeName>
</protein>
<evidence type="ECO:0000255" key="1">
    <source>
        <dbReference type="HAMAP-Rule" id="MF_00270"/>
    </source>
</evidence>
<evidence type="ECO:0000305" key="2"/>
<accession>Q47K96</accession>
<sequence>MAKPPVRKPKKKVCVFCQEKMTYVDYKDTTLLRKFISDRGKIRARRVTGNCTQHQRDVAKAVKNAREMALLPYTSSAR</sequence>
<comment type="function">
    <text evidence="1">Binds as a heterodimer with protein bS6 to the central domain of the 16S rRNA, where it helps stabilize the platform of the 30S subunit.</text>
</comment>
<comment type="subunit">
    <text evidence="1">Part of the 30S ribosomal subunit. Forms a tight heterodimer with protein bS6.</text>
</comment>
<comment type="similarity">
    <text evidence="1">Belongs to the bacterial ribosomal protein bS18 family.</text>
</comment>